<keyword id="KW-0051">Antiviral defense</keyword>
<keyword id="KW-0238">DNA-binding</keyword>
<keyword id="KW-0255">Endonuclease</keyword>
<keyword id="KW-0378">Hydrolase</keyword>
<keyword id="KW-0460">Magnesium</keyword>
<keyword id="KW-0464">Manganese</keyword>
<keyword id="KW-0479">Metal-binding</keyword>
<keyword id="KW-0540">Nuclease</keyword>
<keyword id="KW-1185">Reference proteome</keyword>
<reference key="1">
    <citation type="journal article" date="2002" name="Proc. Natl. Acad. Sci. U.S.A.">
        <title>The complete genome of hyperthermophile Methanopyrus kandleri AV19 and monophyly of archaeal methanogens.</title>
        <authorList>
            <person name="Slesarev A.I."/>
            <person name="Mezhevaya K.V."/>
            <person name="Makarova K.S."/>
            <person name="Polushin N.N."/>
            <person name="Shcherbinina O.V."/>
            <person name="Shakhova V.V."/>
            <person name="Belova G.I."/>
            <person name="Aravind L."/>
            <person name="Natale D.A."/>
            <person name="Rogozin I.B."/>
            <person name="Tatusov R.L."/>
            <person name="Wolf Y.I."/>
            <person name="Stetter K.O."/>
            <person name="Malykh A.G."/>
            <person name="Koonin E.V."/>
            <person name="Kozyavkin S.A."/>
        </authorList>
    </citation>
    <scope>NUCLEOTIDE SEQUENCE [LARGE SCALE GENOMIC DNA]</scope>
    <source>
        <strain>AV19 / DSM 6324 / JCM 9639 / NBRC 100938</strain>
    </source>
</reference>
<name>CAS1_METKA</name>
<feature type="chain" id="PRO_0000417100" description="CRISPR-associated endonuclease Cas1">
    <location>
        <begin position="1"/>
        <end position="331"/>
    </location>
</feature>
<feature type="binding site" evidence="1">
    <location>
        <position position="155"/>
    </location>
    <ligand>
        <name>Mn(2+)</name>
        <dbReference type="ChEBI" id="CHEBI:29035"/>
    </ligand>
</feature>
<feature type="binding site" evidence="1">
    <location>
        <position position="221"/>
    </location>
    <ligand>
        <name>Mn(2+)</name>
        <dbReference type="ChEBI" id="CHEBI:29035"/>
    </ligand>
</feature>
<feature type="binding site" evidence="1">
    <location>
        <position position="236"/>
    </location>
    <ligand>
        <name>Mn(2+)</name>
        <dbReference type="ChEBI" id="CHEBI:29035"/>
    </ligand>
</feature>
<organism>
    <name type="scientific">Methanopyrus kandleri (strain AV19 / DSM 6324 / JCM 9639 / NBRC 100938)</name>
    <dbReference type="NCBI Taxonomy" id="190192"/>
    <lineage>
        <taxon>Archaea</taxon>
        <taxon>Methanobacteriati</taxon>
        <taxon>Methanobacteriota</taxon>
        <taxon>Methanomada group</taxon>
        <taxon>Methanopyri</taxon>
        <taxon>Methanopyrales</taxon>
        <taxon>Methanopyraceae</taxon>
        <taxon>Methanopyrus</taxon>
    </lineage>
</organism>
<sequence length="331" mass="36447">MGAPNDTVIFLRRGKIERREDAFRIGKSKYSAVRTTGIIIAGGAQITTQAVRLALRNEVPIVYLGGNRILGVTVPFSERYATLRLKQYEIASQPSARLAFARPLIASSILARAAVLEFLANETGITGLEDAADEVRSEAERALNAGSTDALRGYEGRAACRYFRALAEVLPDWAFSGRRTRRPPRDPFNAAISFGYAGVLLPVLLSRTVAAGLEPFLGFLHGPRGRRPGLILDLMEEWRALAVDVPVLRRFLDGSLSREMFRWKGDAVLLRDLDAVSAPVLTVLSRVRGGLLEAVDRRIREVRDGVSRQSPPEPLEFDPEDVGVVWDALEV</sequence>
<dbReference type="EC" id="3.1.-.-" evidence="1"/>
<dbReference type="EMBL" id="AE009439">
    <property type="protein sequence ID" value="AAM02525.1"/>
    <property type="molecule type" value="Genomic_DNA"/>
</dbReference>
<dbReference type="RefSeq" id="WP_011019680.1">
    <property type="nucleotide sequence ID" value="NC_003551.1"/>
</dbReference>
<dbReference type="SMR" id="Q8TVS6"/>
<dbReference type="STRING" id="190192.MK1312"/>
<dbReference type="PaxDb" id="190192-MK1312"/>
<dbReference type="EnsemblBacteria" id="AAM02525">
    <property type="protein sequence ID" value="AAM02525"/>
    <property type="gene ID" value="MK1312"/>
</dbReference>
<dbReference type="GeneID" id="1477907"/>
<dbReference type="KEGG" id="mka:MK1312"/>
<dbReference type="PATRIC" id="fig|190192.8.peg.1445"/>
<dbReference type="HOGENOM" id="CLU_838407_0_0_2"/>
<dbReference type="InParanoid" id="Q8TVS6"/>
<dbReference type="OrthoDB" id="2216at2157"/>
<dbReference type="Proteomes" id="UP000001826">
    <property type="component" value="Chromosome"/>
</dbReference>
<dbReference type="GO" id="GO:0003677">
    <property type="term" value="F:DNA binding"/>
    <property type="evidence" value="ECO:0007669"/>
    <property type="project" value="UniProtKB-KW"/>
</dbReference>
<dbReference type="GO" id="GO:0004519">
    <property type="term" value="F:endonuclease activity"/>
    <property type="evidence" value="ECO:0007669"/>
    <property type="project" value="UniProtKB-UniRule"/>
</dbReference>
<dbReference type="GO" id="GO:0046872">
    <property type="term" value="F:metal ion binding"/>
    <property type="evidence" value="ECO:0007669"/>
    <property type="project" value="UniProtKB-UniRule"/>
</dbReference>
<dbReference type="GO" id="GO:0051607">
    <property type="term" value="P:defense response to virus"/>
    <property type="evidence" value="ECO:0007669"/>
    <property type="project" value="UniProtKB-UniRule"/>
</dbReference>
<dbReference type="GO" id="GO:0043571">
    <property type="term" value="P:maintenance of CRISPR repeat elements"/>
    <property type="evidence" value="ECO:0007669"/>
    <property type="project" value="UniProtKB-UniRule"/>
</dbReference>
<dbReference type="CDD" id="cd09634">
    <property type="entry name" value="Cas1_I-II-III"/>
    <property type="match status" value="1"/>
</dbReference>
<dbReference type="Gene3D" id="1.20.120.920">
    <property type="entry name" value="CRISPR-associated endonuclease Cas1, C-terminal domain"/>
    <property type="match status" value="1"/>
</dbReference>
<dbReference type="Gene3D" id="3.100.10.20">
    <property type="entry name" value="CRISPR-associated endonuclease Cas1, N-terminal domain"/>
    <property type="match status" value="1"/>
</dbReference>
<dbReference type="HAMAP" id="MF_01470">
    <property type="entry name" value="Cas1"/>
    <property type="match status" value="1"/>
</dbReference>
<dbReference type="InterPro" id="IPR050646">
    <property type="entry name" value="Cas1"/>
</dbReference>
<dbReference type="InterPro" id="IPR002729">
    <property type="entry name" value="CRISPR-assoc_Cas1"/>
</dbReference>
<dbReference type="InterPro" id="IPR042206">
    <property type="entry name" value="CRISPR-assoc_Cas1_C"/>
</dbReference>
<dbReference type="InterPro" id="IPR042211">
    <property type="entry name" value="CRISPR-assoc_Cas1_N"/>
</dbReference>
<dbReference type="NCBIfam" id="TIGR00287">
    <property type="entry name" value="cas1"/>
    <property type="match status" value="1"/>
</dbReference>
<dbReference type="PANTHER" id="PTHR34353">
    <property type="entry name" value="CRISPR-ASSOCIATED ENDONUCLEASE CAS1 1"/>
    <property type="match status" value="1"/>
</dbReference>
<dbReference type="PANTHER" id="PTHR34353:SF2">
    <property type="entry name" value="CRISPR-ASSOCIATED ENDONUCLEASE CAS1 1"/>
    <property type="match status" value="1"/>
</dbReference>
<dbReference type="Pfam" id="PF01867">
    <property type="entry name" value="Cas_Cas1"/>
    <property type="match status" value="1"/>
</dbReference>
<proteinExistence type="inferred from homology"/>
<gene>
    <name evidence="1" type="primary">cas1</name>
    <name type="ordered locus">MK1312</name>
</gene>
<comment type="function">
    <text evidence="1">CRISPR (clustered regularly interspaced short palindromic repeat), is an adaptive immune system that provides protection against mobile genetic elements (viruses, transposable elements and conjugative plasmids). CRISPR clusters contain spacers, sequences complementary to antecedent mobile elements, and target invading nucleic acids. CRISPR clusters are transcribed and processed into CRISPR RNA (crRNA). Acts as a dsDNA endonuclease. Involved in the integration of spacer DNA into the CRISPR cassette.</text>
</comment>
<comment type="cofactor">
    <cofactor evidence="1">
        <name>Mg(2+)</name>
        <dbReference type="ChEBI" id="CHEBI:18420"/>
    </cofactor>
    <cofactor evidence="1">
        <name>Mn(2+)</name>
        <dbReference type="ChEBI" id="CHEBI:29035"/>
    </cofactor>
</comment>
<comment type="subunit">
    <text evidence="1">Homodimer, forms a heterotetramer with a Cas2 homodimer.</text>
</comment>
<comment type="similarity">
    <text evidence="1">Belongs to the CRISPR-associated endonuclease Cas1 family.</text>
</comment>
<accession>Q8TVS6</accession>
<evidence type="ECO:0000255" key="1">
    <source>
        <dbReference type="HAMAP-Rule" id="MF_01470"/>
    </source>
</evidence>
<protein>
    <recommendedName>
        <fullName evidence="1">CRISPR-associated endonuclease Cas1</fullName>
        <ecNumber evidence="1">3.1.-.-</ecNumber>
    </recommendedName>
</protein>